<gene>
    <name type="primary">URA3</name>
</gene>
<sequence length="265" mass="28633">MPAPSYSTRAAAHPSPVARKLLALMDEKKSNLCASVDVTTTAELLALVEKLAPYICMVKTHIDIVSDFSYEGTVVPLVALAKKHRFLLFEDRKFADIGNTVKHQYAGGVYQIARWADITNAHGVTGAGIVAGLKQAAEETTSEPRGLLMLAELSSKGAIAHGKYTEETVEIAKTDKEFVFGFIAQGDMGGREEGFDWVVMTPGVGLDDTGDALGQQYRTVDTVVQTGTDVIIVGRGLFGKGRHPAVEGERYRKAGWDAYTKRVSP</sequence>
<reference key="1">
    <citation type="thesis" date="2000" institute="University of Vienna" country="Austria">
        <authorList>
            <person name="Biasio W."/>
        </authorList>
    </citation>
    <scope>NUCLEOTIDE SEQUENCE [GENOMIC DNA]</scope>
</reference>
<dbReference type="EC" id="4.1.1.23"/>
<dbReference type="EMBL" id="AJ279021">
    <property type="protein sequence ID" value="CAC08811.1"/>
    <property type="molecule type" value="Genomic_DNA"/>
</dbReference>
<dbReference type="SMR" id="Q9HFN9"/>
<dbReference type="VEuPathDB" id="FungiDB:DIURU_003156"/>
<dbReference type="UniPathway" id="UPA00070">
    <property type="reaction ID" value="UER00120"/>
</dbReference>
<dbReference type="GO" id="GO:0005829">
    <property type="term" value="C:cytosol"/>
    <property type="evidence" value="ECO:0007669"/>
    <property type="project" value="TreeGrafter"/>
</dbReference>
<dbReference type="GO" id="GO:0004590">
    <property type="term" value="F:orotidine-5'-phosphate decarboxylase activity"/>
    <property type="evidence" value="ECO:0007669"/>
    <property type="project" value="UniProtKB-EC"/>
</dbReference>
<dbReference type="GO" id="GO:0006207">
    <property type="term" value="P:'de novo' pyrimidine nucleobase biosynthetic process"/>
    <property type="evidence" value="ECO:0007669"/>
    <property type="project" value="InterPro"/>
</dbReference>
<dbReference type="GO" id="GO:0044205">
    <property type="term" value="P:'de novo' UMP biosynthetic process"/>
    <property type="evidence" value="ECO:0007669"/>
    <property type="project" value="UniProtKB-UniPathway"/>
</dbReference>
<dbReference type="CDD" id="cd04725">
    <property type="entry name" value="OMP_decarboxylase_like"/>
    <property type="match status" value="1"/>
</dbReference>
<dbReference type="FunFam" id="3.20.20.70:FF:000114">
    <property type="entry name" value="Decarboxylase,orotidine phosphate"/>
    <property type="match status" value="1"/>
</dbReference>
<dbReference type="Gene3D" id="3.20.20.70">
    <property type="entry name" value="Aldolase class I"/>
    <property type="match status" value="1"/>
</dbReference>
<dbReference type="InterPro" id="IPR013785">
    <property type="entry name" value="Aldolase_TIM"/>
</dbReference>
<dbReference type="InterPro" id="IPR014732">
    <property type="entry name" value="OMPdecase"/>
</dbReference>
<dbReference type="InterPro" id="IPR018089">
    <property type="entry name" value="OMPdecase_AS"/>
</dbReference>
<dbReference type="InterPro" id="IPR001754">
    <property type="entry name" value="OMPdeCOase_dom"/>
</dbReference>
<dbReference type="InterPro" id="IPR011060">
    <property type="entry name" value="RibuloseP-bd_barrel"/>
</dbReference>
<dbReference type="NCBIfam" id="TIGR01740">
    <property type="entry name" value="pyrF"/>
    <property type="match status" value="1"/>
</dbReference>
<dbReference type="PANTHER" id="PTHR32119">
    <property type="entry name" value="OROTIDINE 5'-PHOSPHATE DECARBOXYLASE"/>
    <property type="match status" value="1"/>
</dbReference>
<dbReference type="PANTHER" id="PTHR32119:SF2">
    <property type="entry name" value="OROTIDINE 5'-PHOSPHATE DECARBOXYLASE"/>
    <property type="match status" value="1"/>
</dbReference>
<dbReference type="Pfam" id="PF00215">
    <property type="entry name" value="OMPdecase"/>
    <property type="match status" value="1"/>
</dbReference>
<dbReference type="SMART" id="SM00934">
    <property type="entry name" value="OMPdecase"/>
    <property type="match status" value="1"/>
</dbReference>
<dbReference type="SUPFAM" id="SSF51366">
    <property type="entry name" value="Ribulose-phoshate binding barrel"/>
    <property type="match status" value="1"/>
</dbReference>
<dbReference type="PROSITE" id="PS00156">
    <property type="entry name" value="OMPDECASE"/>
    <property type="match status" value="1"/>
</dbReference>
<keyword id="KW-0210">Decarboxylase</keyword>
<keyword id="KW-0456">Lyase</keyword>
<keyword id="KW-0665">Pyrimidine biosynthesis</keyword>
<feature type="chain" id="PRO_0000134653" description="Orotidine 5'-phosphate decarboxylase">
    <location>
        <begin position="1"/>
        <end position="265"/>
    </location>
</feature>
<feature type="active site" description="Proton donor" evidence="2">
    <location>
        <position position="93"/>
    </location>
</feature>
<feature type="binding site" evidence="1">
    <location>
        <position position="37"/>
    </location>
    <ligand>
        <name>substrate</name>
    </ligand>
</feature>
<feature type="binding site" evidence="1">
    <location>
        <begin position="59"/>
        <end position="61"/>
    </location>
    <ligand>
        <name>substrate</name>
    </ligand>
</feature>
<feature type="binding site" evidence="1">
    <location>
        <begin position="91"/>
        <end position="100"/>
    </location>
    <ligand>
        <name>substrate</name>
    </ligand>
</feature>
<feature type="binding site" evidence="1">
    <location>
        <position position="217"/>
    </location>
    <ligand>
        <name>substrate</name>
    </ligand>
</feature>
<feature type="binding site" evidence="1">
    <location>
        <position position="235"/>
    </location>
    <ligand>
        <name>substrate</name>
    </ligand>
</feature>
<name>PYRF_DIURU</name>
<proteinExistence type="inferred from homology"/>
<comment type="catalytic activity">
    <reaction evidence="2">
        <text>orotidine 5'-phosphate + H(+) = UMP + CO2</text>
        <dbReference type="Rhea" id="RHEA:11596"/>
        <dbReference type="ChEBI" id="CHEBI:15378"/>
        <dbReference type="ChEBI" id="CHEBI:16526"/>
        <dbReference type="ChEBI" id="CHEBI:57538"/>
        <dbReference type="ChEBI" id="CHEBI:57865"/>
        <dbReference type="EC" id="4.1.1.23"/>
    </reaction>
</comment>
<comment type="pathway">
    <text>Pyrimidine metabolism; UMP biosynthesis via de novo pathway; UMP from orotate: step 2/2.</text>
</comment>
<comment type="similarity">
    <text evidence="3">Belongs to the OMP decarboxylase family.</text>
</comment>
<evidence type="ECO:0000250" key="1"/>
<evidence type="ECO:0000255" key="2">
    <source>
        <dbReference type="PROSITE-ProRule" id="PRU10110"/>
    </source>
</evidence>
<evidence type="ECO:0000305" key="3"/>
<protein>
    <recommendedName>
        <fullName>Orotidine 5'-phosphate decarboxylase</fullName>
        <ecNumber>4.1.1.23</ecNumber>
    </recommendedName>
    <alternativeName>
        <fullName>OMP decarboxylase</fullName>
        <shortName>OMPDCase</shortName>
        <shortName>OMPdecase</shortName>
    </alternativeName>
    <alternativeName>
        <fullName>Uridine 5'-monophosphate synthase</fullName>
        <shortName>UMP synthase</shortName>
    </alternativeName>
</protein>
<accession>Q9HFN9</accession>
<organism>
    <name type="scientific">Diutina rugosa</name>
    <name type="common">Yeast</name>
    <name type="synonym">Candida rugosa</name>
    <dbReference type="NCBI Taxonomy" id="5481"/>
    <lineage>
        <taxon>Eukaryota</taxon>
        <taxon>Fungi</taxon>
        <taxon>Dikarya</taxon>
        <taxon>Ascomycota</taxon>
        <taxon>Saccharomycotina</taxon>
        <taxon>Pichiomycetes</taxon>
        <taxon>Debaryomycetaceae</taxon>
        <taxon>Diutina</taxon>
    </lineage>
</organism>